<proteinExistence type="inferred from homology"/>
<name>SYC_METMP</name>
<organism>
    <name type="scientific">Methanococcus maripaludis (strain DSM 14266 / JCM 13030 / NBRC 101832 / S2 / LL)</name>
    <dbReference type="NCBI Taxonomy" id="267377"/>
    <lineage>
        <taxon>Archaea</taxon>
        <taxon>Methanobacteriati</taxon>
        <taxon>Methanobacteriota</taxon>
        <taxon>Methanomada group</taxon>
        <taxon>Methanococci</taxon>
        <taxon>Methanococcales</taxon>
        <taxon>Methanococcaceae</taxon>
        <taxon>Methanococcus</taxon>
    </lineage>
</organism>
<accession>Q6LYD1</accession>
<feature type="chain" id="PRO_0000159538" description="Cysteine--tRNA ligase">
    <location>
        <begin position="1"/>
        <end position="476"/>
    </location>
</feature>
<feature type="short sequence motif" description="'HIGH' region">
    <location>
        <begin position="30"/>
        <end position="40"/>
    </location>
</feature>
<feature type="short sequence motif" description="'KMSKS' region">
    <location>
        <begin position="265"/>
        <end position="269"/>
    </location>
</feature>
<feature type="binding site" evidence="1">
    <location>
        <position position="28"/>
    </location>
    <ligand>
        <name>Zn(2+)</name>
        <dbReference type="ChEBI" id="CHEBI:29105"/>
    </ligand>
</feature>
<feature type="binding site" evidence="1">
    <location>
        <position position="208"/>
    </location>
    <ligand>
        <name>Zn(2+)</name>
        <dbReference type="ChEBI" id="CHEBI:29105"/>
    </ligand>
</feature>
<feature type="binding site" evidence="1">
    <location>
        <position position="233"/>
    </location>
    <ligand>
        <name>Zn(2+)</name>
        <dbReference type="ChEBI" id="CHEBI:29105"/>
    </ligand>
</feature>
<feature type="binding site" evidence="1">
    <location>
        <position position="237"/>
    </location>
    <ligand>
        <name>Zn(2+)</name>
        <dbReference type="ChEBI" id="CHEBI:29105"/>
    </ligand>
</feature>
<feature type="binding site" evidence="1">
    <location>
        <position position="268"/>
    </location>
    <ligand>
        <name>ATP</name>
        <dbReference type="ChEBI" id="CHEBI:30616"/>
    </ligand>
</feature>
<sequence length="476" mass="55409">MLKVYNTLTRCEEEFKTLNEKEVKMYVCGPTVYDNTHLGHGRTYVSFDIIRRYLEHMGYTVNLVINFTDIDDKIIKRAYEKEKDPKEISEQFIKVFLDDMATLKVKPADIYPKVTEHISEIIAFIEKLIEKGFAYKTEDGVYFEVKKFKNYGKLSNINLEDLVSGARIETSEKKKNQKDFALWKTAKPGEPKWESPFGSGRPGWHIECSAMSSKYLGEQFDIHGGGRDLSFPHHENEIAQSSAYSGKDWVNYWLHTGFVMVNGEKMSKSLGNFVTIGDISKEYSPEILRFFFIQRHYRSPIDYTAESMNHVKNNLEKIYNVIENIRISLEKSEKSRTWDENEFLLYDILKNSKNNFYNAMNSDFNTVKALKSVFEVSNGVNKYLSLTKTPSEGLLLKALDFYKIIGEIFGLFENYFKESSDSDEEEFVTFLIELRSDVRLQKNYEMSDKIRDGLKNLGYQIEDNPKEGTVFKKINI</sequence>
<keyword id="KW-0030">Aminoacyl-tRNA synthetase</keyword>
<keyword id="KW-0067">ATP-binding</keyword>
<keyword id="KW-0963">Cytoplasm</keyword>
<keyword id="KW-0436">Ligase</keyword>
<keyword id="KW-0479">Metal-binding</keyword>
<keyword id="KW-0547">Nucleotide-binding</keyword>
<keyword id="KW-0648">Protein biosynthesis</keyword>
<keyword id="KW-1185">Reference proteome</keyword>
<keyword id="KW-0862">Zinc</keyword>
<gene>
    <name evidence="1" type="primary">cysS</name>
    <name type="ordered locus">MMP1060</name>
</gene>
<evidence type="ECO:0000255" key="1">
    <source>
        <dbReference type="HAMAP-Rule" id="MF_00041"/>
    </source>
</evidence>
<dbReference type="EC" id="6.1.1.16" evidence="1"/>
<dbReference type="EMBL" id="BX950229">
    <property type="protein sequence ID" value="CAF30616.1"/>
    <property type="molecule type" value="Genomic_DNA"/>
</dbReference>
<dbReference type="RefSeq" id="WP_011171004.1">
    <property type="nucleotide sequence ID" value="NC_005791.1"/>
</dbReference>
<dbReference type="SMR" id="Q6LYD1"/>
<dbReference type="STRING" id="267377.MMP1060"/>
<dbReference type="EnsemblBacteria" id="CAF30616">
    <property type="protein sequence ID" value="CAF30616"/>
    <property type="gene ID" value="MMP1060"/>
</dbReference>
<dbReference type="GeneID" id="2762671"/>
<dbReference type="KEGG" id="mmp:MMP1060"/>
<dbReference type="PATRIC" id="fig|267377.15.peg.1093"/>
<dbReference type="eggNOG" id="arCOG00486">
    <property type="taxonomic scope" value="Archaea"/>
</dbReference>
<dbReference type="HOGENOM" id="CLU_013528_0_1_2"/>
<dbReference type="OrthoDB" id="9445at2157"/>
<dbReference type="Proteomes" id="UP000000590">
    <property type="component" value="Chromosome"/>
</dbReference>
<dbReference type="GO" id="GO:0005737">
    <property type="term" value="C:cytoplasm"/>
    <property type="evidence" value="ECO:0007669"/>
    <property type="project" value="UniProtKB-SubCell"/>
</dbReference>
<dbReference type="GO" id="GO:0005524">
    <property type="term" value="F:ATP binding"/>
    <property type="evidence" value="ECO:0007669"/>
    <property type="project" value="UniProtKB-UniRule"/>
</dbReference>
<dbReference type="GO" id="GO:0004817">
    <property type="term" value="F:cysteine-tRNA ligase activity"/>
    <property type="evidence" value="ECO:0007669"/>
    <property type="project" value="UniProtKB-UniRule"/>
</dbReference>
<dbReference type="GO" id="GO:0008270">
    <property type="term" value="F:zinc ion binding"/>
    <property type="evidence" value="ECO:0007669"/>
    <property type="project" value="UniProtKB-UniRule"/>
</dbReference>
<dbReference type="GO" id="GO:0006423">
    <property type="term" value="P:cysteinyl-tRNA aminoacylation"/>
    <property type="evidence" value="ECO:0007669"/>
    <property type="project" value="UniProtKB-UniRule"/>
</dbReference>
<dbReference type="CDD" id="cd00672">
    <property type="entry name" value="CysRS_core"/>
    <property type="match status" value="1"/>
</dbReference>
<dbReference type="FunFam" id="3.40.50.620:FF:000009">
    <property type="entry name" value="Cysteine--tRNA ligase"/>
    <property type="match status" value="1"/>
</dbReference>
<dbReference type="Gene3D" id="1.20.120.1910">
    <property type="entry name" value="Cysteine-tRNA ligase, C-terminal anti-codon recognition domain"/>
    <property type="match status" value="1"/>
</dbReference>
<dbReference type="Gene3D" id="3.40.50.620">
    <property type="entry name" value="HUPs"/>
    <property type="match status" value="1"/>
</dbReference>
<dbReference type="HAMAP" id="MF_00041">
    <property type="entry name" value="Cys_tRNA_synth"/>
    <property type="match status" value="1"/>
</dbReference>
<dbReference type="InterPro" id="IPR015803">
    <property type="entry name" value="Cys-tRNA-ligase"/>
</dbReference>
<dbReference type="InterPro" id="IPR015273">
    <property type="entry name" value="Cys-tRNA-synt_Ia_DALR"/>
</dbReference>
<dbReference type="InterPro" id="IPR024909">
    <property type="entry name" value="Cys-tRNA/MSH_ligase"/>
</dbReference>
<dbReference type="InterPro" id="IPR014729">
    <property type="entry name" value="Rossmann-like_a/b/a_fold"/>
</dbReference>
<dbReference type="InterPro" id="IPR032678">
    <property type="entry name" value="tRNA-synt_1_cat_dom"/>
</dbReference>
<dbReference type="InterPro" id="IPR009080">
    <property type="entry name" value="tRNAsynth_Ia_anticodon-bd"/>
</dbReference>
<dbReference type="NCBIfam" id="TIGR00435">
    <property type="entry name" value="cysS"/>
    <property type="match status" value="1"/>
</dbReference>
<dbReference type="PANTHER" id="PTHR10890:SF3">
    <property type="entry name" value="CYSTEINE--TRNA LIGASE, CYTOPLASMIC"/>
    <property type="match status" value="1"/>
</dbReference>
<dbReference type="PANTHER" id="PTHR10890">
    <property type="entry name" value="CYSTEINYL-TRNA SYNTHETASE"/>
    <property type="match status" value="1"/>
</dbReference>
<dbReference type="Pfam" id="PF09190">
    <property type="entry name" value="DALR_2"/>
    <property type="match status" value="1"/>
</dbReference>
<dbReference type="Pfam" id="PF01406">
    <property type="entry name" value="tRNA-synt_1e"/>
    <property type="match status" value="1"/>
</dbReference>
<dbReference type="PRINTS" id="PR00983">
    <property type="entry name" value="TRNASYNTHCYS"/>
</dbReference>
<dbReference type="SMART" id="SM00840">
    <property type="entry name" value="DALR_2"/>
    <property type="match status" value="1"/>
</dbReference>
<dbReference type="SUPFAM" id="SSF47323">
    <property type="entry name" value="Anticodon-binding domain of a subclass of class I aminoacyl-tRNA synthetases"/>
    <property type="match status" value="1"/>
</dbReference>
<dbReference type="SUPFAM" id="SSF52374">
    <property type="entry name" value="Nucleotidylyl transferase"/>
    <property type="match status" value="1"/>
</dbReference>
<protein>
    <recommendedName>
        <fullName evidence="1">Cysteine--tRNA ligase</fullName>
        <ecNumber evidence="1">6.1.1.16</ecNumber>
    </recommendedName>
    <alternativeName>
        <fullName evidence="1">Cysteinyl-tRNA synthetase</fullName>
        <shortName evidence="1">CysRS</shortName>
    </alternativeName>
</protein>
<reference key="1">
    <citation type="journal article" date="2004" name="J. Bacteriol.">
        <title>Complete genome sequence of the genetically tractable hydrogenotrophic methanogen Methanococcus maripaludis.</title>
        <authorList>
            <person name="Hendrickson E.L."/>
            <person name="Kaul R."/>
            <person name="Zhou Y."/>
            <person name="Bovee D."/>
            <person name="Chapman P."/>
            <person name="Chung J."/>
            <person name="Conway de Macario E."/>
            <person name="Dodsworth J.A."/>
            <person name="Gillett W."/>
            <person name="Graham D.E."/>
            <person name="Hackett M."/>
            <person name="Haydock A.K."/>
            <person name="Kang A."/>
            <person name="Land M.L."/>
            <person name="Levy R."/>
            <person name="Lie T.J."/>
            <person name="Major T.A."/>
            <person name="Moore B.C."/>
            <person name="Porat I."/>
            <person name="Palmeiri A."/>
            <person name="Rouse G."/>
            <person name="Saenphimmachak C."/>
            <person name="Soell D."/>
            <person name="Van Dien S."/>
            <person name="Wang T."/>
            <person name="Whitman W.B."/>
            <person name="Xia Q."/>
            <person name="Zhang Y."/>
            <person name="Larimer F.W."/>
            <person name="Olson M.V."/>
            <person name="Leigh J.A."/>
        </authorList>
    </citation>
    <scope>NUCLEOTIDE SEQUENCE [LARGE SCALE GENOMIC DNA]</scope>
    <source>
        <strain>DSM 14266 / JCM 13030 / NBRC 101832 / S2 / LL</strain>
    </source>
</reference>
<comment type="catalytic activity">
    <reaction evidence="1">
        <text>tRNA(Cys) + L-cysteine + ATP = L-cysteinyl-tRNA(Cys) + AMP + diphosphate</text>
        <dbReference type="Rhea" id="RHEA:17773"/>
        <dbReference type="Rhea" id="RHEA-COMP:9661"/>
        <dbReference type="Rhea" id="RHEA-COMP:9679"/>
        <dbReference type="ChEBI" id="CHEBI:30616"/>
        <dbReference type="ChEBI" id="CHEBI:33019"/>
        <dbReference type="ChEBI" id="CHEBI:35235"/>
        <dbReference type="ChEBI" id="CHEBI:78442"/>
        <dbReference type="ChEBI" id="CHEBI:78517"/>
        <dbReference type="ChEBI" id="CHEBI:456215"/>
        <dbReference type="EC" id="6.1.1.16"/>
    </reaction>
</comment>
<comment type="cofactor">
    <cofactor evidence="1">
        <name>Zn(2+)</name>
        <dbReference type="ChEBI" id="CHEBI:29105"/>
    </cofactor>
    <text evidence="1">Binds 1 zinc ion per subunit.</text>
</comment>
<comment type="subcellular location">
    <subcellularLocation>
        <location evidence="1">Cytoplasm</location>
    </subcellularLocation>
</comment>
<comment type="similarity">
    <text evidence="1">Belongs to the class-I aminoacyl-tRNA synthetase family.</text>
</comment>